<keyword id="KW-0150">Chloroplast</keyword>
<keyword id="KW-0934">Plastid</keyword>
<proteinExistence type="inferred from homology"/>
<feature type="chain" id="PRO_0000217386" description="Uncharacterized protein ycf54">
    <location>
        <begin position="1"/>
        <end position="108"/>
    </location>
</feature>
<organism>
    <name type="scientific">Porphyra purpurea</name>
    <name type="common">Red seaweed</name>
    <name type="synonym">Ulva purpurea</name>
    <dbReference type="NCBI Taxonomy" id="2787"/>
    <lineage>
        <taxon>Eukaryota</taxon>
        <taxon>Rhodophyta</taxon>
        <taxon>Bangiophyceae</taxon>
        <taxon>Bangiales</taxon>
        <taxon>Bangiaceae</taxon>
        <taxon>Porphyra</taxon>
    </lineage>
</organism>
<geneLocation type="chloroplast"/>
<sequence>MTTYYFALASQNFLLSEEPLEEVFRERINYYQSNNKEIDFWLIPNPKFLNKPAMIKFKNLVPNEAIAIISTNSIFINWLKLRIGYVCIGQFEDSLKLSKESLNIINRT</sequence>
<protein>
    <recommendedName>
        <fullName>Uncharacterized protein ycf54</fullName>
    </recommendedName>
    <alternativeName>
        <fullName>ORF108</fullName>
    </alternativeName>
</protein>
<evidence type="ECO:0000305" key="1"/>
<name>YCF54_PORPU</name>
<dbReference type="EMBL" id="U38804">
    <property type="protein sequence ID" value="AAC08090.1"/>
    <property type="molecule type" value="Genomic_DNA"/>
</dbReference>
<dbReference type="PIR" id="S73125">
    <property type="entry name" value="S73125"/>
</dbReference>
<dbReference type="SMR" id="P51204"/>
<dbReference type="GO" id="GO:0009507">
    <property type="term" value="C:chloroplast"/>
    <property type="evidence" value="ECO:0007669"/>
    <property type="project" value="UniProtKB-SubCell"/>
</dbReference>
<dbReference type="Gene3D" id="3.30.70.1860">
    <property type="entry name" value="Uncharacterised protein family Ycf54"/>
    <property type="match status" value="1"/>
</dbReference>
<dbReference type="InterPro" id="IPR019616">
    <property type="entry name" value="Ycf54"/>
</dbReference>
<dbReference type="InterPro" id="IPR038409">
    <property type="entry name" value="Ycf54-like_sf"/>
</dbReference>
<dbReference type="PANTHER" id="PTHR35319">
    <property type="match status" value="1"/>
</dbReference>
<dbReference type="PANTHER" id="PTHR35319:SF2">
    <property type="entry name" value="YCF54"/>
    <property type="match status" value="1"/>
</dbReference>
<dbReference type="Pfam" id="PF10674">
    <property type="entry name" value="Ycf54"/>
    <property type="match status" value="1"/>
</dbReference>
<gene>
    <name type="primary">ycf54</name>
</gene>
<accession>P51204</accession>
<comment type="subcellular location">
    <subcellularLocation>
        <location>Plastid</location>
        <location>Chloroplast</location>
    </subcellularLocation>
</comment>
<comment type="similarity">
    <text evidence="1">Belongs to the ycf54 family.</text>
</comment>
<reference key="1">
    <citation type="journal article" date="1995" name="Plant Mol. Biol. Rep.">
        <title>Complete nucleotide sequence of the Porphyra purpurea chloroplast genome.</title>
        <authorList>
            <person name="Reith M.E."/>
            <person name="Munholland J."/>
        </authorList>
    </citation>
    <scope>NUCLEOTIDE SEQUENCE [LARGE SCALE GENOMIC DNA]</scope>
    <source>
        <strain>Avonport</strain>
    </source>
</reference>